<name>BIOH_ECOL6</name>
<organism>
    <name type="scientific">Escherichia coli O6:H1 (strain CFT073 / ATCC 700928 / UPEC)</name>
    <dbReference type="NCBI Taxonomy" id="199310"/>
    <lineage>
        <taxon>Bacteria</taxon>
        <taxon>Pseudomonadati</taxon>
        <taxon>Pseudomonadota</taxon>
        <taxon>Gammaproteobacteria</taxon>
        <taxon>Enterobacterales</taxon>
        <taxon>Enterobacteriaceae</taxon>
        <taxon>Escherichia</taxon>
    </lineage>
</organism>
<proteinExistence type="inferred from homology"/>
<dbReference type="EC" id="3.1.1.85" evidence="2"/>
<dbReference type="EMBL" id="AE014075">
    <property type="protein sequence ID" value="AAN82627.1"/>
    <property type="molecule type" value="Genomic_DNA"/>
</dbReference>
<dbReference type="RefSeq" id="WP_001060084.1">
    <property type="nucleotide sequence ID" value="NZ_CP051263.1"/>
</dbReference>
<dbReference type="SMR" id="Q8FCT4"/>
<dbReference type="STRING" id="199310.c4189"/>
<dbReference type="ESTHER" id="ecoli-bioh">
    <property type="family name" value="BioH"/>
</dbReference>
<dbReference type="MEROPS" id="S33.994"/>
<dbReference type="KEGG" id="ecc:c4189"/>
<dbReference type="eggNOG" id="COG0596">
    <property type="taxonomic scope" value="Bacteria"/>
</dbReference>
<dbReference type="HOGENOM" id="CLU_020336_12_2_6"/>
<dbReference type="BioCyc" id="ECOL199310:C4189-MONOMER"/>
<dbReference type="UniPathway" id="UPA00078"/>
<dbReference type="Proteomes" id="UP000001410">
    <property type="component" value="Chromosome"/>
</dbReference>
<dbReference type="GO" id="GO:0005737">
    <property type="term" value="C:cytoplasm"/>
    <property type="evidence" value="ECO:0007669"/>
    <property type="project" value="UniProtKB-SubCell"/>
</dbReference>
<dbReference type="GO" id="GO:0090499">
    <property type="term" value="F:pimelyl-[acyl-carrier protein] methyl ester esterase activity"/>
    <property type="evidence" value="ECO:0007669"/>
    <property type="project" value="UniProtKB-EC"/>
</dbReference>
<dbReference type="GO" id="GO:0009102">
    <property type="term" value="P:biotin biosynthetic process"/>
    <property type="evidence" value="ECO:0007669"/>
    <property type="project" value="UniProtKB-UniRule"/>
</dbReference>
<dbReference type="FunFam" id="3.40.50.1820:FF:000045">
    <property type="entry name" value="Pimeloyl-[acyl-carrier protein] methyl ester esterase"/>
    <property type="match status" value="1"/>
</dbReference>
<dbReference type="Gene3D" id="3.40.50.1820">
    <property type="entry name" value="alpha/beta hydrolase"/>
    <property type="match status" value="1"/>
</dbReference>
<dbReference type="HAMAP" id="MF_01260">
    <property type="entry name" value="Carboxylester"/>
    <property type="match status" value="1"/>
</dbReference>
<dbReference type="InterPro" id="IPR000073">
    <property type="entry name" value="AB_hydrolase_1"/>
</dbReference>
<dbReference type="InterPro" id="IPR029058">
    <property type="entry name" value="AB_hydrolase_fold"/>
</dbReference>
<dbReference type="InterPro" id="IPR010076">
    <property type="entry name" value="BioH"/>
</dbReference>
<dbReference type="InterPro" id="IPR050228">
    <property type="entry name" value="Carboxylesterase_BioH"/>
</dbReference>
<dbReference type="NCBIfam" id="TIGR01738">
    <property type="entry name" value="bioH"/>
    <property type="match status" value="1"/>
</dbReference>
<dbReference type="NCBIfam" id="NF007674">
    <property type="entry name" value="PRK10349.1"/>
    <property type="match status" value="1"/>
</dbReference>
<dbReference type="PANTHER" id="PTHR43194">
    <property type="entry name" value="HYDROLASE ALPHA/BETA FOLD FAMILY"/>
    <property type="match status" value="1"/>
</dbReference>
<dbReference type="PANTHER" id="PTHR43194:SF5">
    <property type="entry name" value="PIMELOYL-[ACYL-CARRIER PROTEIN] METHYL ESTER ESTERASE"/>
    <property type="match status" value="1"/>
</dbReference>
<dbReference type="Pfam" id="PF00561">
    <property type="entry name" value="Abhydrolase_1"/>
    <property type="match status" value="1"/>
</dbReference>
<dbReference type="SUPFAM" id="SSF53474">
    <property type="entry name" value="alpha/beta-Hydrolases"/>
    <property type="match status" value="1"/>
</dbReference>
<comment type="function">
    <text evidence="2">The physiological role of BioH is to remove the methyl group introduced by BioC when the pimeloyl moiety is complete. It allows to synthesize pimeloyl-ACP via the fatty acid synthetic pathway through the hydrolysis of the ester bonds of pimeloyl-ACP esters.</text>
</comment>
<comment type="catalytic activity">
    <reaction evidence="2">
        <text>6-carboxyhexanoyl-[ACP] methyl ester + H2O = 6-carboxyhexanoyl-[ACP] + methanol + H(+)</text>
        <dbReference type="Rhea" id="RHEA:42700"/>
        <dbReference type="Rhea" id="RHEA-COMP:9955"/>
        <dbReference type="Rhea" id="RHEA-COMP:10186"/>
        <dbReference type="ChEBI" id="CHEBI:15377"/>
        <dbReference type="ChEBI" id="CHEBI:15378"/>
        <dbReference type="ChEBI" id="CHEBI:17790"/>
        <dbReference type="ChEBI" id="CHEBI:78846"/>
        <dbReference type="ChEBI" id="CHEBI:82735"/>
        <dbReference type="EC" id="3.1.1.85"/>
    </reaction>
</comment>
<comment type="pathway">
    <text evidence="2">Cofactor biosynthesis; biotin biosynthesis.</text>
</comment>
<comment type="subunit">
    <text evidence="2">Monomer.</text>
</comment>
<comment type="subcellular location">
    <subcellularLocation>
        <location evidence="2">Cytoplasm</location>
    </subcellularLocation>
</comment>
<comment type="similarity">
    <text evidence="2">Belongs to the AB hydrolase superfamily. Carboxylesterase BioH family.</text>
</comment>
<keyword id="KW-0093">Biotin biosynthesis</keyword>
<keyword id="KW-0963">Cytoplasm</keyword>
<keyword id="KW-0378">Hydrolase</keyword>
<keyword id="KW-1185">Reference proteome</keyword>
<keyword id="KW-0719">Serine esterase</keyword>
<reference key="1">
    <citation type="journal article" date="2002" name="Proc. Natl. Acad. Sci. U.S.A.">
        <title>Extensive mosaic structure revealed by the complete genome sequence of uropathogenic Escherichia coli.</title>
        <authorList>
            <person name="Welch R.A."/>
            <person name="Burland V."/>
            <person name="Plunkett G. III"/>
            <person name="Redford P."/>
            <person name="Roesch P."/>
            <person name="Rasko D."/>
            <person name="Buckles E.L."/>
            <person name="Liou S.-R."/>
            <person name="Boutin A."/>
            <person name="Hackett J."/>
            <person name="Stroud D."/>
            <person name="Mayhew G.F."/>
            <person name="Rose D.J."/>
            <person name="Zhou S."/>
            <person name="Schwartz D.C."/>
            <person name="Perna N.T."/>
            <person name="Mobley H.L.T."/>
            <person name="Donnenberg M.S."/>
            <person name="Blattner F.R."/>
        </authorList>
    </citation>
    <scope>NUCLEOTIDE SEQUENCE [LARGE SCALE GENOMIC DNA]</scope>
    <source>
        <strain>CFT073 / ATCC 700928 / UPEC</strain>
    </source>
</reference>
<accession>Q8FCT4</accession>
<sequence length="256" mass="28600">MNNIWWQTKGQGNVHLVLLHGWGLNAEVWRCIDEELSSHFTLHLVDLPGFGRSRGFGALSLADMAEVVLRQAPDKAIWLGWSLGGLVASQIALTHPERVLALVTVASSPCFSARDEWPGIKPDVLAGFQQQLSDDFQRTVERFLALQTMGTETARQDARALKKTVLALPMPEVDVLNGGLEILKTVDLRQPLQNVPMPFLRLYGYLDGLVPRKVVPMLDKLWPHSESYIFAKAAHAPFISHPDEFCHLLVALKQRV</sequence>
<feature type="chain" id="PRO_0000204474" description="Pimeloyl-[acyl-carrier protein] methyl ester esterase">
    <location>
        <begin position="1"/>
        <end position="256"/>
    </location>
</feature>
<feature type="domain" description="AB hydrolase-1" evidence="1">
    <location>
        <begin position="15"/>
        <end position="242"/>
    </location>
</feature>
<feature type="active site" description="Nucleophile" evidence="2">
    <location>
        <position position="82"/>
    </location>
</feature>
<feature type="active site" evidence="2">
    <location>
        <position position="207"/>
    </location>
</feature>
<feature type="active site" evidence="2">
    <location>
        <position position="235"/>
    </location>
</feature>
<feature type="binding site" evidence="2">
    <location>
        <position position="22"/>
    </location>
    <ligand>
        <name>substrate</name>
    </ligand>
</feature>
<feature type="binding site" evidence="2">
    <location>
        <begin position="82"/>
        <end position="83"/>
    </location>
    <ligand>
        <name>substrate</name>
    </ligand>
</feature>
<feature type="binding site" evidence="2">
    <location>
        <begin position="143"/>
        <end position="147"/>
    </location>
    <ligand>
        <name>substrate</name>
    </ligand>
</feature>
<feature type="binding site" evidence="2">
    <location>
        <position position="235"/>
    </location>
    <ligand>
        <name>substrate</name>
    </ligand>
</feature>
<protein>
    <recommendedName>
        <fullName evidence="2">Pimeloyl-[acyl-carrier protein] methyl ester esterase</fullName>
        <ecNumber evidence="2">3.1.1.85</ecNumber>
    </recommendedName>
    <alternativeName>
        <fullName evidence="2">Biotin synthesis protein BioH</fullName>
    </alternativeName>
    <alternativeName>
        <fullName evidence="2">Carboxylesterase BioH</fullName>
    </alternativeName>
</protein>
<gene>
    <name evidence="2" type="primary">bioH</name>
    <name type="ordered locus">c4189</name>
</gene>
<evidence type="ECO:0000255" key="1"/>
<evidence type="ECO:0000255" key="2">
    <source>
        <dbReference type="HAMAP-Rule" id="MF_01260"/>
    </source>
</evidence>